<comment type="function">
    <text evidence="1">A humoral factor that may play a role in stress tolerance.</text>
</comment>
<comment type="subcellular location">
    <subcellularLocation>
        <location evidence="1">Secreted</location>
    </subcellularLocation>
</comment>
<comment type="similarity">
    <text evidence="2">Belongs to the Turandot family.</text>
</comment>
<feature type="signal peptide" evidence="2">
    <location>
        <begin position="1"/>
        <end position="22"/>
    </location>
</feature>
<feature type="chain" id="PRO_0000355004" description="Protein Turandot X">
    <location>
        <begin position="23"/>
        <end position="150"/>
    </location>
</feature>
<feature type="region of interest" description="Disordered" evidence="3">
    <location>
        <begin position="127"/>
        <end position="150"/>
    </location>
</feature>
<feature type="compositionally biased region" description="Polar residues" evidence="3">
    <location>
        <begin position="132"/>
        <end position="150"/>
    </location>
</feature>
<protein>
    <recommendedName>
        <fullName>Protein Turandot X</fullName>
    </recommendedName>
</protein>
<evidence type="ECO:0000250" key="1">
    <source>
        <dbReference type="UniProtKB" id="Q8IN41"/>
    </source>
</evidence>
<evidence type="ECO:0000255" key="2"/>
<evidence type="ECO:0000256" key="3">
    <source>
        <dbReference type="SAM" id="MobiDB-lite"/>
    </source>
</evidence>
<evidence type="ECO:0000312" key="4">
    <source>
        <dbReference type="EMBL" id="EDX12158.1"/>
    </source>
</evidence>
<name>TOTX_DROSI</name>
<gene>
    <name evidence="1" type="primary">TotX</name>
    <name type="ORF">GD20023</name>
</gene>
<keyword id="KW-0391">Immunity</keyword>
<keyword id="KW-0399">Innate immunity</keyword>
<keyword id="KW-1185">Reference proteome</keyword>
<keyword id="KW-0964">Secreted</keyword>
<keyword id="KW-0732">Signal</keyword>
<sequence length="150" mass="17190">MGLHIGSLLICVFLGILPFATANTNRSGYEEQRNYLLNIFHNPLVNDSIKEKNIPELIAFYQRYPTDVPLSDADRQQFERFIHDYREYREVLVDGVPPQGGSFGNIFGHFLGRVGTRYISSLFNKKREEGQSNHANSPTTLPSRIQKMTK</sequence>
<proteinExistence type="inferred from homology"/>
<accession>B4R1P9</accession>
<reference evidence="4" key="1">
    <citation type="journal article" date="2007" name="Nature">
        <title>Evolution of genes and genomes on the Drosophila phylogeny.</title>
        <authorList>
            <consortium name="Drosophila 12 genomes consortium"/>
        </authorList>
    </citation>
    <scope>NUCLEOTIDE SEQUENCE [LARGE SCALE GENOMIC DNA]</scope>
</reference>
<organism>
    <name type="scientific">Drosophila simulans</name>
    <name type="common">Fruit fly</name>
    <dbReference type="NCBI Taxonomy" id="7240"/>
    <lineage>
        <taxon>Eukaryota</taxon>
        <taxon>Metazoa</taxon>
        <taxon>Ecdysozoa</taxon>
        <taxon>Arthropoda</taxon>
        <taxon>Hexapoda</taxon>
        <taxon>Insecta</taxon>
        <taxon>Pterygota</taxon>
        <taxon>Neoptera</taxon>
        <taxon>Endopterygota</taxon>
        <taxon>Diptera</taxon>
        <taxon>Brachycera</taxon>
        <taxon>Muscomorpha</taxon>
        <taxon>Ephydroidea</taxon>
        <taxon>Drosophilidae</taxon>
        <taxon>Drosophila</taxon>
        <taxon>Sophophora</taxon>
    </lineage>
</organism>
<dbReference type="EMBL" id="CM000364">
    <property type="protein sequence ID" value="EDX12158.1"/>
    <property type="molecule type" value="Genomic_DNA"/>
</dbReference>
<dbReference type="STRING" id="7240.B4R1P9"/>
<dbReference type="EnsemblMetazoa" id="FBtr0219933">
    <property type="protein sequence ID" value="FBpp0218425"/>
    <property type="gene ID" value="FBgn0191505"/>
</dbReference>
<dbReference type="EnsemblMetazoa" id="XM_002102619.4">
    <property type="protein sequence ID" value="XP_002102655.1"/>
    <property type="gene ID" value="LOC6727263"/>
</dbReference>
<dbReference type="GeneID" id="6727263"/>
<dbReference type="KEGG" id="dsi:Dsimw501_GD20023"/>
<dbReference type="HOGENOM" id="CLU_1817777_0_0_1"/>
<dbReference type="OMA" id="QFERFIH"/>
<dbReference type="OrthoDB" id="7850164at2759"/>
<dbReference type="PhylomeDB" id="B4R1P9"/>
<dbReference type="Proteomes" id="UP000000304">
    <property type="component" value="Chromosome 3R"/>
</dbReference>
<dbReference type="Bgee" id="FBgn0191505">
    <property type="expression patterns" value="Expressed in adult organism and 2 other cell types or tissues"/>
</dbReference>
<dbReference type="GO" id="GO:0005615">
    <property type="term" value="C:extracellular space"/>
    <property type="evidence" value="ECO:0000250"/>
    <property type="project" value="UniProtKB"/>
</dbReference>
<dbReference type="GO" id="GO:0034605">
    <property type="term" value="P:cellular response to heat"/>
    <property type="evidence" value="ECO:0007669"/>
    <property type="project" value="EnsemblMetazoa"/>
</dbReference>
<dbReference type="GO" id="GO:0034599">
    <property type="term" value="P:cellular response to oxidative stress"/>
    <property type="evidence" value="ECO:0007669"/>
    <property type="project" value="EnsemblMetazoa"/>
</dbReference>
<dbReference type="GO" id="GO:0045087">
    <property type="term" value="P:innate immune response"/>
    <property type="evidence" value="ECO:0007669"/>
    <property type="project" value="UniProtKB-KW"/>
</dbReference>
<dbReference type="GO" id="GO:0009617">
    <property type="term" value="P:response to bacterium"/>
    <property type="evidence" value="ECO:0000250"/>
    <property type="project" value="UniProtKB"/>
</dbReference>
<dbReference type="GO" id="GO:0009408">
    <property type="term" value="P:response to heat"/>
    <property type="evidence" value="ECO:0000250"/>
    <property type="project" value="UniProtKB"/>
</dbReference>
<dbReference type="GO" id="GO:0006979">
    <property type="term" value="P:response to oxidative stress"/>
    <property type="evidence" value="ECO:0000250"/>
    <property type="project" value="UniProtKB"/>
</dbReference>
<dbReference type="InterPro" id="IPR010825">
    <property type="entry name" value="Turandot"/>
</dbReference>
<dbReference type="Pfam" id="PF07240">
    <property type="entry name" value="Turandot"/>
    <property type="match status" value="1"/>
</dbReference>